<name>FABH_ARATH</name>
<reference key="1">
    <citation type="journal article" date="1994" name="Plant Physiol.">
        <title>Cloning of a cDNA encoding 3-ketoacyl-acyl carrier protein synthase III from Arabidopsis.</title>
        <authorList>
            <person name="Tai H."/>
            <person name="Post-Beittenmiller D."/>
            <person name="Jaworski J.G."/>
        </authorList>
    </citation>
    <scope>NUCLEOTIDE SEQUENCE [MRNA]</scope>
    <source>
        <strain>cv. Columbia</strain>
    </source>
</reference>
<reference key="2">
    <citation type="online journal article" date="1997" name="Plant Gene Register">
        <title>Cloning of a gene encoding 3-ketoacyl-acyl carrier protein synthase III from Arabidopsis thaliana.</title>
        <authorList>
            <person name="Haouazine-Takvorian N."/>
            <person name="Takvorian A."/>
            <person name="Kreis M."/>
        </authorList>
        <locator>PGR97-149</locator>
    </citation>
    <scope>NUCLEOTIDE SEQUENCE [GENOMIC DNA]</scope>
    <source>
        <strain>cv. Columbia</strain>
    </source>
</reference>
<reference key="3">
    <citation type="journal article" date="2000" name="Nature">
        <title>Sequence and analysis of chromosome 1 of the plant Arabidopsis thaliana.</title>
        <authorList>
            <person name="Theologis A."/>
            <person name="Ecker J.R."/>
            <person name="Palm C.J."/>
            <person name="Federspiel N.A."/>
            <person name="Kaul S."/>
            <person name="White O."/>
            <person name="Alonso J."/>
            <person name="Altafi H."/>
            <person name="Araujo R."/>
            <person name="Bowman C.L."/>
            <person name="Brooks S.Y."/>
            <person name="Buehler E."/>
            <person name="Chan A."/>
            <person name="Chao Q."/>
            <person name="Chen H."/>
            <person name="Cheuk R.F."/>
            <person name="Chin C.W."/>
            <person name="Chung M.K."/>
            <person name="Conn L."/>
            <person name="Conway A.B."/>
            <person name="Conway A.R."/>
            <person name="Creasy T.H."/>
            <person name="Dewar K."/>
            <person name="Dunn P."/>
            <person name="Etgu P."/>
            <person name="Feldblyum T.V."/>
            <person name="Feng J.-D."/>
            <person name="Fong B."/>
            <person name="Fujii C.Y."/>
            <person name="Gill J.E."/>
            <person name="Goldsmith A.D."/>
            <person name="Haas B."/>
            <person name="Hansen N.F."/>
            <person name="Hughes B."/>
            <person name="Huizar L."/>
            <person name="Hunter J.L."/>
            <person name="Jenkins J."/>
            <person name="Johnson-Hopson C."/>
            <person name="Khan S."/>
            <person name="Khaykin E."/>
            <person name="Kim C.J."/>
            <person name="Koo H.L."/>
            <person name="Kremenetskaia I."/>
            <person name="Kurtz D.B."/>
            <person name="Kwan A."/>
            <person name="Lam B."/>
            <person name="Langin-Hooper S."/>
            <person name="Lee A."/>
            <person name="Lee J.M."/>
            <person name="Lenz C.A."/>
            <person name="Li J.H."/>
            <person name="Li Y.-P."/>
            <person name="Lin X."/>
            <person name="Liu S.X."/>
            <person name="Liu Z.A."/>
            <person name="Luros J.S."/>
            <person name="Maiti R."/>
            <person name="Marziali A."/>
            <person name="Militscher J."/>
            <person name="Miranda M."/>
            <person name="Nguyen M."/>
            <person name="Nierman W.C."/>
            <person name="Osborne B.I."/>
            <person name="Pai G."/>
            <person name="Peterson J."/>
            <person name="Pham P.K."/>
            <person name="Rizzo M."/>
            <person name="Rooney T."/>
            <person name="Rowley D."/>
            <person name="Sakano H."/>
            <person name="Salzberg S.L."/>
            <person name="Schwartz J.R."/>
            <person name="Shinn P."/>
            <person name="Southwick A.M."/>
            <person name="Sun H."/>
            <person name="Tallon L.J."/>
            <person name="Tambunga G."/>
            <person name="Toriumi M.J."/>
            <person name="Town C.D."/>
            <person name="Utterback T."/>
            <person name="Van Aken S."/>
            <person name="Vaysberg M."/>
            <person name="Vysotskaia V.S."/>
            <person name="Walker M."/>
            <person name="Wu D."/>
            <person name="Yu G."/>
            <person name="Fraser C.M."/>
            <person name="Venter J.C."/>
            <person name="Davis R.W."/>
        </authorList>
    </citation>
    <scope>NUCLEOTIDE SEQUENCE [LARGE SCALE GENOMIC DNA]</scope>
    <source>
        <strain>cv. Columbia</strain>
    </source>
</reference>
<reference key="4">
    <citation type="journal article" date="2017" name="Plant J.">
        <title>Araport11: a complete reannotation of the Arabidopsis thaliana reference genome.</title>
        <authorList>
            <person name="Cheng C.Y."/>
            <person name="Krishnakumar V."/>
            <person name="Chan A.P."/>
            <person name="Thibaud-Nissen F."/>
            <person name="Schobel S."/>
            <person name="Town C.D."/>
        </authorList>
    </citation>
    <scope>GENOME REANNOTATION</scope>
    <source>
        <strain>cv. Columbia</strain>
    </source>
</reference>
<reference key="5">
    <citation type="journal article" date="2003" name="Science">
        <title>Empirical analysis of transcriptional activity in the Arabidopsis genome.</title>
        <authorList>
            <person name="Yamada K."/>
            <person name="Lim J."/>
            <person name="Dale J.M."/>
            <person name="Chen H."/>
            <person name="Shinn P."/>
            <person name="Palm C.J."/>
            <person name="Southwick A.M."/>
            <person name="Wu H.C."/>
            <person name="Kim C.J."/>
            <person name="Nguyen M."/>
            <person name="Pham P.K."/>
            <person name="Cheuk R.F."/>
            <person name="Karlin-Newmann G."/>
            <person name="Liu S.X."/>
            <person name="Lam B."/>
            <person name="Sakano H."/>
            <person name="Wu T."/>
            <person name="Yu G."/>
            <person name="Miranda M."/>
            <person name="Quach H.L."/>
            <person name="Tripp M."/>
            <person name="Chang C.H."/>
            <person name="Lee J.M."/>
            <person name="Toriumi M.J."/>
            <person name="Chan M.M."/>
            <person name="Tang C.C."/>
            <person name="Onodera C.S."/>
            <person name="Deng J.M."/>
            <person name="Akiyama K."/>
            <person name="Ansari Y."/>
            <person name="Arakawa T."/>
            <person name="Banh J."/>
            <person name="Banno F."/>
            <person name="Bowser L."/>
            <person name="Brooks S.Y."/>
            <person name="Carninci P."/>
            <person name="Chao Q."/>
            <person name="Choy N."/>
            <person name="Enju A."/>
            <person name="Goldsmith A.D."/>
            <person name="Gurjal M."/>
            <person name="Hansen N.F."/>
            <person name="Hayashizaki Y."/>
            <person name="Johnson-Hopson C."/>
            <person name="Hsuan V.W."/>
            <person name="Iida K."/>
            <person name="Karnes M."/>
            <person name="Khan S."/>
            <person name="Koesema E."/>
            <person name="Ishida J."/>
            <person name="Jiang P.X."/>
            <person name="Jones T."/>
            <person name="Kawai J."/>
            <person name="Kamiya A."/>
            <person name="Meyers C."/>
            <person name="Nakajima M."/>
            <person name="Narusaka M."/>
            <person name="Seki M."/>
            <person name="Sakurai T."/>
            <person name="Satou M."/>
            <person name="Tamse R."/>
            <person name="Vaysberg M."/>
            <person name="Wallender E.K."/>
            <person name="Wong C."/>
            <person name="Yamamura Y."/>
            <person name="Yuan S."/>
            <person name="Shinozaki K."/>
            <person name="Davis R.W."/>
            <person name="Theologis A."/>
            <person name="Ecker J.R."/>
        </authorList>
    </citation>
    <scope>NUCLEOTIDE SEQUENCE [LARGE SCALE MRNA]</scope>
    <source>
        <strain>cv. Columbia</strain>
    </source>
</reference>
<protein>
    <recommendedName>
        <fullName>Beta-ketoacyl-[acyl-carrier-protein] synthase III, chloroplastic</fullName>
        <shortName>Beta-ketoacyl-ACP synthase III</shortName>
        <shortName>KAS III</shortName>
        <ecNumber>2.3.1.180</ecNumber>
    </recommendedName>
    <alternativeName>
        <fullName>3-oxoacyl-[acyl-carrier-protein] synthase 3</fullName>
    </alternativeName>
    <alternativeName>
        <fullName>3-oxoacyl-[acyl-carrier-protein] synthase III</fullName>
    </alternativeName>
</protein>
<proteinExistence type="evidence at transcript level"/>
<evidence type="ECO:0000250" key="1"/>
<evidence type="ECO:0000305" key="2"/>
<dbReference type="EC" id="2.3.1.180"/>
<dbReference type="EMBL" id="L31891">
    <property type="protein sequence ID" value="AAA61348.1"/>
    <property type="molecule type" value="mRNA"/>
</dbReference>
<dbReference type="EMBL" id="Y11689">
    <property type="protein sequence ID" value="CAA72385.1"/>
    <property type="molecule type" value="Genomic_DNA"/>
</dbReference>
<dbReference type="EMBL" id="AC005698">
    <property type="protein sequence ID" value="AAD43621.1"/>
    <property type="status" value="ALT_SEQ"/>
    <property type="molecule type" value="Genomic_DNA"/>
</dbReference>
<dbReference type="EMBL" id="AC007190">
    <property type="protein sequence ID" value="AAF19534.1"/>
    <property type="status" value="ALT_SEQ"/>
    <property type="molecule type" value="Genomic_DNA"/>
</dbReference>
<dbReference type="EMBL" id="CP002684">
    <property type="protein sequence ID" value="AEE33989.1"/>
    <property type="molecule type" value="Genomic_DNA"/>
</dbReference>
<dbReference type="EMBL" id="CP002684">
    <property type="protein sequence ID" value="AEE33990.1"/>
    <property type="molecule type" value="Genomic_DNA"/>
</dbReference>
<dbReference type="EMBL" id="AY063804">
    <property type="protein sequence ID" value="AAL36160.1"/>
    <property type="molecule type" value="mRNA"/>
</dbReference>
<dbReference type="EMBL" id="AY091275">
    <property type="protein sequence ID" value="AAM14214.1"/>
    <property type="molecule type" value="mRNA"/>
</dbReference>
<dbReference type="SMR" id="P49243"/>
<dbReference type="FunCoup" id="P49243">
    <property type="interactions" value="580"/>
</dbReference>
<dbReference type="STRING" id="3702.P49243"/>
<dbReference type="PaxDb" id="3702-AT1G62640.1"/>
<dbReference type="ProteomicsDB" id="222440"/>
<dbReference type="EnsemblPlants" id="AT1G62640.1">
    <property type="protein sequence ID" value="AT1G62640.1"/>
    <property type="gene ID" value="AT1G62640"/>
</dbReference>
<dbReference type="EnsemblPlants" id="AT1G62640.2">
    <property type="protein sequence ID" value="AT1G62640.2"/>
    <property type="gene ID" value="AT1G62640"/>
</dbReference>
<dbReference type="GeneID" id="842561"/>
<dbReference type="Gramene" id="AT1G62640.1">
    <property type="protein sequence ID" value="AT1G62640.1"/>
    <property type="gene ID" value="AT1G62640"/>
</dbReference>
<dbReference type="Gramene" id="AT1G62640.2">
    <property type="protein sequence ID" value="AT1G62640.2"/>
    <property type="gene ID" value="AT1G62640"/>
</dbReference>
<dbReference type="KEGG" id="ath:AT1G62640"/>
<dbReference type="Araport" id="AT1G62640"/>
<dbReference type="TAIR" id="AT1G62640">
    <property type="gene designation" value="KAS III"/>
</dbReference>
<dbReference type="eggNOG" id="ENOG502QUK2">
    <property type="taxonomic scope" value="Eukaryota"/>
</dbReference>
<dbReference type="HOGENOM" id="CLU_039592_0_1_1"/>
<dbReference type="InParanoid" id="P49243"/>
<dbReference type="OMA" id="WGSEGDK"/>
<dbReference type="PhylomeDB" id="P49243"/>
<dbReference type="BioCyc" id="ARA:AT1G62640-MONOMER"/>
<dbReference type="UniPathway" id="UPA00094"/>
<dbReference type="PRO" id="PR:P49243"/>
<dbReference type="Proteomes" id="UP000006548">
    <property type="component" value="Chromosome 1"/>
</dbReference>
<dbReference type="ExpressionAtlas" id="P49243">
    <property type="expression patterns" value="baseline and differential"/>
</dbReference>
<dbReference type="GO" id="GO:0009507">
    <property type="term" value="C:chloroplast"/>
    <property type="evidence" value="ECO:0007005"/>
    <property type="project" value="TAIR"/>
</dbReference>
<dbReference type="GO" id="GO:0009570">
    <property type="term" value="C:chloroplast stroma"/>
    <property type="evidence" value="ECO:0007005"/>
    <property type="project" value="TAIR"/>
</dbReference>
<dbReference type="GO" id="GO:0004315">
    <property type="term" value="F:3-oxoacyl-[acyl-carrier-protein] synthase activity"/>
    <property type="evidence" value="ECO:0007669"/>
    <property type="project" value="InterPro"/>
</dbReference>
<dbReference type="GO" id="GO:0033818">
    <property type="term" value="F:beta-ketoacyl-acyl-carrier-protein synthase III activity"/>
    <property type="evidence" value="ECO:0007669"/>
    <property type="project" value="UniProtKB-EC"/>
</dbReference>
<dbReference type="GO" id="GO:0006633">
    <property type="term" value="P:fatty acid biosynthetic process"/>
    <property type="evidence" value="ECO:0007669"/>
    <property type="project" value="UniProtKB-UniPathway"/>
</dbReference>
<dbReference type="CDD" id="cd00830">
    <property type="entry name" value="KAS_III"/>
    <property type="match status" value="1"/>
</dbReference>
<dbReference type="FunFam" id="3.40.47.10:FF:000004">
    <property type="entry name" value="3-oxoacyl-[acyl-carrier-protein] synthase 3"/>
    <property type="match status" value="1"/>
</dbReference>
<dbReference type="Gene3D" id="3.40.47.10">
    <property type="match status" value="1"/>
</dbReference>
<dbReference type="HAMAP" id="MF_01815">
    <property type="entry name" value="FabH"/>
    <property type="match status" value="1"/>
</dbReference>
<dbReference type="InterPro" id="IPR013747">
    <property type="entry name" value="ACP_syn_III_C"/>
</dbReference>
<dbReference type="InterPro" id="IPR013751">
    <property type="entry name" value="ACP_syn_III_N"/>
</dbReference>
<dbReference type="InterPro" id="IPR004655">
    <property type="entry name" value="FabH"/>
</dbReference>
<dbReference type="InterPro" id="IPR016039">
    <property type="entry name" value="Thiolase-like"/>
</dbReference>
<dbReference type="NCBIfam" id="TIGR00747">
    <property type="entry name" value="fabH"/>
    <property type="match status" value="1"/>
</dbReference>
<dbReference type="NCBIfam" id="NF006829">
    <property type="entry name" value="PRK09352.1"/>
    <property type="match status" value="1"/>
</dbReference>
<dbReference type="PANTHER" id="PTHR43091">
    <property type="entry name" value="3-OXOACYL-[ACYL-CARRIER-PROTEIN] SYNTHASE"/>
    <property type="match status" value="1"/>
</dbReference>
<dbReference type="PANTHER" id="PTHR43091:SF1">
    <property type="entry name" value="BETA-KETOACYL-[ACYL-CARRIER-PROTEIN] SYNTHASE III, CHLOROPLASTIC"/>
    <property type="match status" value="1"/>
</dbReference>
<dbReference type="Pfam" id="PF08545">
    <property type="entry name" value="ACP_syn_III"/>
    <property type="match status" value="1"/>
</dbReference>
<dbReference type="Pfam" id="PF08541">
    <property type="entry name" value="ACP_syn_III_C"/>
    <property type="match status" value="1"/>
</dbReference>
<dbReference type="SUPFAM" id="SSF53901">
    <property type="entry name" value="Thiolase-like"/>
    <property type="match status" value="1"/>
</dbReference>
<accession>P49243</accession>
<accession>P93722</accession>
<accession>Q9SI84</accession>
<accession>Q9SXD3</accession>
<gene>
    <name type="ordered locus">At1g62640</name>
    <name type="ORF">F23N19.2</name>
    <name type="ORF">T3P18.20</name>
</gene>
<feature type="transit peptide" description="Chloroplast" evidence="2">
    <location>
        <begin position="1"/>
        <end position="43"/>
    </location>
</feature>
<feature type="chain" id="PRO_0000008732" description="Beta-ketoacyl-[acyl-carrier-protein] synthase III, chloroplastic">
    <location>
        <begin position="44"/>
        <end position="404"/>
    </location>
</feature>
<feature type="active site" evidence="1">
    <location>
        <position position="179"/>
    </location>
</feature>
<feature type="active site" evidence="1">
    <location>
        <position position="330"/>
    </location>
</feature>
<feature type="active site" evidence="1">
    <location>
        <position position="360"/>
    </location>
</feature>
<feature type="sequence conflict" description="In Ref. 1; AAA61348." evidence="2" ref="1">
    <original>N</original>
    <variation>T</variation>
    <location>
        <position position="108"/>
    </location>
</feature>
<feature type="sequence conflict" description="In Ref. 1; AAA61348." evidence="2" ref="1">
    <original>G</original>
    <variation>A</variation>
    <location>
        <position position="114"/>
    </location>
</feature>
<feature type="sequence conflict" description="In Ref. 1; AAA61348." evidence="2" ref="1">
    <original>A</original>
    <variation>D</variation>
    <location>
        <position position="190"/>
    </location>
</feature>
<feature type="sequence conflict" description="In Ref. 1; AAA61348." evidence="2" ref="1">
    <original>QND</original>
    <variation>RNE</variation>
    <location>
        <begin position="266"/>
        <end position="268"/>
    </location>
</feature>
<feature type="sequence conflict" description="In Ref. 1; AAA61348." evidence="2" ref="1">
    <original>R</original>
    <variation>S</variation>
    <location>
        <position position="343"/>
    </location>
</feature>
<feature type="sequence conflict" description="In Ref. 1; AAA61348." evidence="2" ref="1">
    <original>M</original>
    <variation>V</variation>
    <location>
        <position position="401"/>
    </location>
</feature>
<sequence length="404" mass="42847">MANASGFFTHPSIPNLRSRIHVPVRVSGSGFCVSNRFSKRVLCSSVSSVDKDASSSPSQYQRPRLVPSGCKLIGCGSAVPSLLISNDDLAKIVDTNDEWIATRTGIRNRRVVSGKDSLVGLAVEAATKALEMAEVVPEDIDLVLMCTSTPDDLFGAAPQIQKALGCTKNPLAYDITAACSGFVLGLVSAACHIRGGGFKNVLVIGADSLSRFVDWTDRGTCILFGDAAGAVVVQACDIEDDGLFSFDVHSDGDGRRHLNASVKESQNDGESSSNGSVFGDFPPKQSSYSCIQMNGKEVFRFAVKCVPQSIESALQKAGLPASAIDWLLLHQANQRIIDSVATRLHFPPERVISNLANYGNTSAASIPLALDEAVRSGKVKPGHTIATSGFGAGLTWGSAIMRWR</sequence>
<organism>
    <name type="scientific">Arabidopsis thaliana</name>
    <name type="common">Mouse-ear cress</name>
    <dbReference type="NCBI Taxonomy" id="3702"/>
    <lineage>
        <taxon>Eukaryota</taxon>
        <taxon>Viridiplantae</taxon>
        <taxon>Streptophyta</taxon>
        <taxon>Embryophyta</taxon>
        <taxon>Tracheophyta</taxon>
        <taxon>Spermatophyta</taxon>
        <taxon>Magnoliopsida</taxon>
        <taxon>eudicotyledons</taxon>
        <taxon>Gunneridae</taxon>
        <taxon>Pentapetalae</taxon>
        <taxon>rosids</taxon>
        <taxon>malvids</taxon>
        <taxon>Brassicales</taxon>
        <taxon>Brassicaceae</taxon>
        <taxon>Camelineae</taxon>
        <taxon>Arabidopsis</taxon>
    </lineage>
</organism>
<keyword id="KW-0150">Chloroplast</keyword>
<keyword id="KW-0275">Fatty acid biosynthesis</keyword>
<keyword id="KW-0276">Fatty acid metabolism</keyword>
<keyword id="KW-0444">Lipid biosynthesis</keyword>
<keyword id="KW-0443">Lipid metabolism</keyword>
<keyword id="KW-0934">Plastid</keyword>
<keyword id="KW-1185">Reference proteome</keyword>
<keyword id="KW-0808">Transferase</keyword>
<keyword id="KW-0809">Transit peptide</keyword>
<comment type="function">
    <text evidence="1">Catalyzes the condensation reaction of fatty acid synthesis by the addition to an acyl acceptor of two carbons from malonyl-ACP. KAS III catalyzes the first condensation reaction which initiates fatty acid synthesis and may therefore play a role in governing the total rate of fatty acid production. Possesses both acetoacetyl-ACP synthase and acetyl transacylase activities (By similarity).</text>
</comment>
<comment type="catalytic activity">
    <reaction>
        <text>malonyl-[ACP] + acetyl-CoA + H(+) = 3-oxobutanoyl-[ACP] + CO2 + CoA</text>
        <dbReference type="Rhea" id="RHEA:12080"/>
        <dbReference type="Rhea" id="RHEA-COMP:9623"/>
        <dbReference type="Rhea" id="RHEA-COMP:9625"/>
        <dbReference type="ChEBI" id="CHEBI:15378"/>
        <dbReference type="ChEBI" id="CHEBI:16526"/>
        <dbReference type="ChEBI" id="CHEBI:57287"/>
        <dbReference type="ChEBI" id="CHEBI:57288"/>
        <dbReference type="ChEBI" id="CHEBI:78449"/>
        <dbReference type="ChEBI" id="CHEBI:78450"/>
        <dbReference type="EC" id="2.3.1.180"/>
    </reaction>
</comment>
<comment type="pathway">
    <text>Lipid metabolism; fatty acid biosynthesis.</text>
</comment>
<comment type="subcellular location">
    <subcellularLocation>
        <location>Plastid</location>
        <location>Chloroplast</location>
    </subcellularLocation>
</comment>
<comment type="similarity">
    <text evidence="2">Belongs to the thiolase-like superfamily. FabH family.</text>
</comment>
<comment type="sequence caution" evidence="2">
    <conflict type="erroneous gene model prediction">
        <sequence resource="EMBL-CDS" id="AAD43621"/>
    </conflict>
</comment>
<comment type="sequence caution" evidence="2">
    <conflict type="erroneous gene model prediction">
        <sequence resource="EMBL-CDS" id="AAF19534"/>
    </conflict>
</comment>